<accession>B5RAE4</accession>
<dbReference type="EMBL" id="AM933173">
    <property type="protein sequence ID" value="CAR37458.1"/>
    <property type="molecule type" value="Genomic_DNA"/>
</dbReference>
<dbReference type="RefSeq" id="WP_000154617.1">
    <property type="nucleotide sequence ID" value="NC_011274.1"/>
</dbReference>
<dbReference type="SMR" id="B5RAE4"/>
<dbReference type="KEGG" id="seg:SG1597"/>
<dbReference type="HOGENOM" id="CLU_001265_61_2_6"/>
<dbReference type="Proteomes" id="UP000008321">
    <property type="component" value="Chromosome"/>
</dbReference>
<dbReference type="GO" id="GO:0005886">
    <property type="term" value="C:plasma membrane"/>
    <property type="evidence" value="ECO:0007669"/>
    <property type="project" value="UniProtKB-SubCell"/>
</dbReference>
<dbReference type="GO" id="GO:0015144">
    <property type="term" value="F:carbohydrate transmembrane transporter activity"/>
    <property type="evidence" value="ECO:0007669"/>
    <property type="project" value="UniProtKB-UniRule"/>
</dbReference>
<dbReference type="CDD" id="cd17324">
    <property type="entry name" value="MFS_NepI_like"/>
    <property type="match status" value="1"/>
</dbReference>
<dbReference type="Gene3D" id="1.20.1250.20">
    <property type="entry name" value="MFS general substrate transporter like domains"/>
    <property type="match status" value="1"/>
</dbReference>
<dbReference type="HAMAP" id="MF_00517">
    <property type="entry name" value="MFS_SotB"/>
    <property type="match status" value="1"/>
</dbReference>
<dbReference type="InterPro" id="IPR011701">
    <property type="entry name" value="MFS"/>
</dbReference>
<dbReference type="InterPro" id="IPR020846">
    <property type="entry name" value="MFS_dom"/>
</dbReference>
<dbReference type="InterPro" id="IPR050189">
    <property type="entry name" value="MFS_Efflux_Transporters"/>
</dbReference>
<dbReference type="InterPro" id="IPR036259">
    <property type="entry name" value="MFS_trans_sf"/>
</dbReference>
<dbReference type="InterPro" id="IPR023495">
    <property type="entry name" value="Sugar_effux_transptr_put"/>
</dbReference>
<dbReference type="NCBIfam" id="NF002921">
    <property type="entry name" value="PRK03545.1"/>
    <property type="match status" value="1"/>
</dbReference>
<dbReference type="PANTHER" id="PTHR43124">
    <property type="entry name" value="PURINE EFFLUX PUMP PBUE"/>
    <property type="match status" value="1"/>
</dbReference>
<dbReference type="PANTHER" id="PTHR43124:SF4">
    <property type="entry name" value="SUGAR EFFLUX TRANSPORTER"/>
    <property type="match status" value="1"/>
</dbReference>
<dbReference type="Pfam" id="PF07690">
    <property type="entry name" value="MFS_1"/>
    <property type="match status" value="1"/>
</dbReference>
<dbReference type="SUPFAM" id="SSF103473">
    <property type="entry name" value="MFS general substrate transporter"/>
    <property type="match status" value="1"/>
</dbReference>
<dbReference type="PROSITE" id="PS50850">
    <property type="entry name" value="MFS"/>
    <property type="match status" value="1"/>
</dbReference>
<organism>
    <name type="scientific">Salmonella gallinarum (strain 287/91 / NCTC 13346)</name>
    <dbReference type="NCBI Taxonomy" id="550538"/>
    <lineage>
        <taxon>Bacteria</taxon>
        <taxon>Pseudomonadati</taxon>
        <taxon>Pseudomonadota</taxon>
        <taxon>Gammaproteobacteria</taxon>
        <taxon>Enterobacterales</taxon>
        <taxon>Enterobacteriaceae</taxon>
        <taxon>Salmonella</taxon>
    </lineage>
</organism>
<proteinExistence type="inferred from homology"/>
<evidence type="ECO:0000255" key="1">
    <source>
        <dbReference type="HAMAP-Rule" id="MF_00517"/>
    </source>
</evidence>
<keyword id="KW-0997">Cell inner membrane</keyword>
<keyword id="KW-1003">Cell membrane</keyword>
<keyword id="KW-0472">Membrane</keyword>
<keyword id="KW-0762">Sugar transport</keyword>
<keyword id="KW-0812">Transmembrane</keyword>
<keyword id="KW-1133">Transmembrane helix</keyword>
<keyword id="KW-0813">Transport</keyword>
<reference key="1">
    <citation type="journal article" date="2008" name="Genome Res.">
        <title>Comparative genome analysis of Salmonella enteritidis PT4 and Salmonella gallinarum 287/91 provides insights into evolutionary and host adaptation pathways.</title>
        <authorList>
            <person name="Thomson N.R."/>
            <person name="Clayton D.J."/>
            <person name="Windhorst D."/>
            <person name="Vernikos G."/>
            <person name="Davidson S."/>
            <person name="Churcher C."/>
            <person name="Quail M.A."/>
            <person name="Stevens M."/>
            <person name="Jones M.A."/>
            <person name="Watson M."/>
            <person name="Barron A."/>
            <person name="Layton A."/>
            <person name="Pickard D."/>
            <person name="Kingsley R.A."/>
            <person name="Bignell A."/>
            <person name="Clark L."/>
            <person name="Harris B."/>
            <person name="Ormond D."/>
            <person name="Abdellah Z."/>
            <person name="Brooks K."/>
            <person name="Cherevach I."/>
            <person name="Chillingworth T."/>
            <person name="Woodward J."/>
            <person name="Norberczak H."/>
            <person name="Lord A."/>
            <person name="Arrowsmith C."/>
            <person name="Jagels K."/>
            <person name="Moule S."/>
            <person name="Mungall K."/>
            <person name="Saunders M."/>
            <person name="Whitehead S."/>
            <person name="Chabalgoity J.A."/>
            <person name="Maskell D."/>
            <person name="Humphreys T."/>
            <person name="Roberts M."/>
            <person name="Barrow P.A."/>
            <person name="Dougan G."/>
            <person name="Parkhill J."/>
        </authorList>
    </citation>
    <scope>NUCLEOTIDE SEQUENCE [LARGE SCALE GENOMIC DNA]</scope>
    <source>
        <strain>287/91 / NCTC 13346</strain>
    </source>
</reference>
<comment type="function">
    <text evidence="1">Involved in the efflux of sugars. The physiological role may be the reduction of the intracellular concentration of toxic sugars or sugar metabolites.</text>
</comment>
<comment type="subcellular location">
    <subcellularLocation>
        <location evidence="1">Cell inner membrane</location>
        <topology evidence="1">Multi-pass membrane protein</topology>
    </subcellularLocation>
</comment>
<comment type="similarity">
    <text evidence="1">Belongs to the major facilitator superfamily. SotB (TC 2.A.1.2) family.</text>
</comment>
<name>SOTB_SALG2</name>
<feature type="chain" id="PRO_1000127472" description="Probable sugar efflux transporter">
    <location>
        <begin position="1"/>
        <end position="396"/>
    </location>
</feature>
<feature type="transmembrane region" description="Helical" evidence="1">
    <location>
        <begin position="15"/>
        <end position="35"/>
    </location>
</feature>
<feature type="transmembrane region" description="Helical" evidence="1">
    <location>
        <begin position="50"/>
        <end position="70"/>
    </location>
</feature>
<feature type="transmembrane region" description="Helical" evidence="1">
    <location>
        <begin position="81"/>
        <end position="101"/>
    </location>
</feature>
<feature type="transmembrane region" description="Helical" evidence="1">
    <location>
        <begin position="103"/>
        <end position="123"/>
    </location>
</feature>
<feature type="transmembrane region" description="Helical" evidence="1">
    <location>
        <begin position="136"/>
        <end position="156"/>
    </location>
</feature>
<feature type="transmembrane region" description="Helical" evidence="1">
    <location>
        <begin position="169"/>
        <end position="189"/>
    </location>
</feature>
<feature type="transmembrane region" description="Helical" evidence="1">
    <location>
        <begin position="209"/>
        <end position="229"/>
    </location>
</feature>
<feature type="transmembrane region" description="Helical" evidence="1">
    <location>
        <begin position="246"/>
        <end position="266"/>
    </location>
</feature>
<feature type="transmembrane region" description="Helical" evidence="1">
    <location>
        <begin position="275"/>
        <end position="295"/>
    </location>
</feature>
<feature type="transmembrane region" description="Helical" evidence="1">
    <location>
        <begin position="301"/>
        <end position="321"/>
    </location>
</feature>
<feature type="transmembrane region" description="Helical" evidence="1">
    <location>
        <begin position="333"/>
        <end position="353"/>
    </location>
</feature>
<feature type="transmembrane region" description="Helical" evidence="1">
    <location>
        <begin position="364"/>
        <end position="384"/>
    </location>
</feature>
<gene>
    <name evidence="1" type="primary">sotB</name>
    <name type="ordered locus">SG1597</name>
</gene>
<protein>
    <recommendedName>
        <fullName evidence="1">Probable sugar efflux transporter</fullName>
    </recommendedName>
</protein>
<sequence length="396" mass="42407">MTINPVSRKVAWLRVVTLAIAAFIFNTTEFVPVGLLSDIAESFHMQTAQVGIMLTIYAWVVAVMSLPFMLLTSQMERRKLLICLFVLFIASHVLSFLAWNFTVLVISRIGIAFAHAIFWSITASLAIRLAPAGKRAQALSLIATGTALAMVLGLPIGRVVGQYFGWRTTFFAIGMGALITLLCLIKLLPKLPSEHSGSLKSLPLLFRRPALMSLYVLTVVVVTAHYTAYSYIEPFVQNVAGLSANFATVLLLILGGAGIIGSLVFGKLGNRHASSLVSIAIALLVVCLLLLLPAADSEAHLAILSIFWGIAIMVIGLGMQVKVLALAPDATDVAMALFSGIFNIGIGAGALVGNQVSLHWSMSAIGYIGAIPACAALVWAVLIFRKWPVTLEEQPH</sequence>